<feature type="chain" id="PRO_1000129857" description="GMP reductase">
    <location>
        <begin position="1"/>
        <end position="347"/>
    </location>
</feature>
<feature type="active site" description="Thioimidate intermediate" evidence="1">
    <location>
        <position position="186"/>
    </location>
</feature>
<feature type="binding site" evidence="1">
    <location>
        <begin position="108"/>
        <end position="131"/>
    </location>
    <ligand>
        <name>NADP(+)</name>
        <dbReference type="ChEBI" id="CHEBI:58349"/>
    </ligand>
</feature>
<feature type="binding site" evidence="1">
    <location>
        <position position="181"/>
    </location>
    <ligand>
        <name>K(+)</name>
        <dbReference type="ChEBI" id="CHEBI:29103"/>
    </ligand>
</feature>
<feature type="binding site" evidence="1">
    <location>
        <position position="183"/>
    </location>
    <ligand>
        <name>K(+)</name>
        <dbReference type="ChEBI" id="CHEBI:29103"/>
    </ligand>
</feature>
<feature type="binding site" evidence="1">
    <location>
        <begin position="216"/>
        <end position="239"/>
    </location>
    <ligand>
        <name>NADP(+)</name>
        <dbReference type="ChEBI" id="CHEBI:58349"/>
    </ligand>
</feature>
<proteinExistence type="inferred from homology"/>
<dbReference type="EC" id="1.7.1.7" evidence="1"/>
<dbReference type="EMBL" id="CP000970">
    <property type="protein sequence ID" value="ACB19570.1"/>
    <property type="molecule type" value="Genomic_DNA"/>
</dbReference>
<dbReference type="RefSeq" id="WP_001217333.1">
    <property type="nucleotide sequence ID" value="NC_010498.1"/>
</dbReference>
<dbReference type="SMR" id="B1LG40"/>
<dbReference type="KEGG" id="ecm:EcSMS35_0108"/>
<dbReference type="HOGENOM" id="CLU_022552_5_3_6"/>
<dbReference type="Proteomes" id="UP000007011">
    <property type="component" value="Chromosome"/>
</dbReference>
<dbReference type="GO" id="GO:0005829">
    <property type="term" value="C:cytosol"/>
    <property type="evidence" value="ECO:0007669"/>
    <property type="project" value="TreeGrafter"/>
</dbReference>
<dbReference type="GO" id="GO:1902560">
    <property type="term" value="C:GMP reductase complex"/>
    <property type="evidence" value="ECO:0007669"/>
    <property type="project" value="InterPro"/>
</dbReference>
<dbReference type="GO" id="GO:0003920">
    <property type="term" value="F:GMP reductase activity"/>
    <property type="evidence" value="ECO:0007669"/>
    <property type="project" value="UniProtKB-UniRule"/>
</dbReference>
<dbReference type="GO" id="GO:0046872">
    <property type="term" value="F:metal ion binding"/>
    <property type="evidence" value="ECO:0007669"/>
    <property type="project" value="UniProtKB-KW"/>
</dbReference>
<dbReference type="GO" id="GO:0006163">
    <property type="term" value="P:purine nucleotide metabolic process"/>
    <property type="evidence" value="ECO:0007669"/>
    <property type="project" value="UniProtKB-UniRule"/>
</dbReference>
<dbReference type="CDD" id="cd00381">
    <property type="entry name" value="IMPDH"/>
    <property type="match status" value="1"/>
</dbReference>
<dbReference type="FunFam" id="3.20.20.70:FF:000012">
    <property type="entry name" value="GMP reductase"/>
    <property type="match status" value="1"/>
</dbReference>
<dbReference type="Gene3D" id="3.20.20.70">
    <property type="entry name" value="Aldolase class I"/>
    <property type="match status" value="1"/>
</dbReference>
<dbReference type="HAMAP" id="MF_00596">
    <property type="entry name" value="GMP_reduct_type1"/>
    <property type="match status" value="1"/>
</dbReference>
<dbReference type="InterPro" id="IPR013785">
    <property type="entry name" value="Aldolase_TIM"/>
</dbReference>
<dbReference type="InterPro" id="IPR050139">
    <property type="entry name" value="GMP_reductase"/>
</dbReference>
<dbReference type="InterPro" id="IPR005993">
    <property type="entry name" value="GMPR"/>
</dbReference>
<dbReference type="InterPro" id="IPR015875">
    <property type="entry name" value="IMP_DH/GMP_Rdtase_CS"/>
</dbReference>
<dbReference type="InterPro" id="IPR001093">
    <property type="entry name" value="IMP_DH_GMPRt"/>
</dbReference>
<dbReference type="NCBIfam" id="TIGR01305">
    <property type="entry name" value="GMP_reduct_1"/>
    <property type="match status" value="1"/>
</dbReference>
<dbReference type="NCBIfam" id="NF003470">
    <property type="entry name" value="PRK05096.1"/>
    <property type="match status" value="1"/>
</dbReference>
<dbReference type="PANTHER" id="PTHR43170">
    <property type="entry name" value="GMP REDUCTASE"/>
    <property type="match status" value="1"/>
</dbReference>
<dbReference type="PANTHER" id="PTHR43170:SF5">
    <property type="entry name" value="GMP REDUCTASE"/>
    <property type="match status" value="1"/>
</dbReference>
<dbReference type="Pfam" id="PF00478">
    <property type="entry name" value="IMPDH"/>
    <property type="match status" value="1"/>
</dbReference>
<dbReference type="PIRSF" id="PIRSF000235">
    <property type="entry name" value="GMP_reductase"/>
    <property type="match status" value="1"/>
</dbReference>
<dbReference type="SMART" id="SM01240">
    <property type="entry name" value="IMPDH"/>
    <property type="match status" value="1"/>
</dbReference>
<dbReference type="SUPFAM" id="SSF51412">
    <property type="entry name" value="Inosine monophosphate dehydrogenase (IMPDH)"/>
    <property type="match status" value="1"/>
</dbReference>
<dbReference type="PROSITE" id="PS00487">
    <property type="entry name" value="IMP_DH_GMP_RED"/>
    <property type="match status" value="1"/>
</dbReference>
<comment type="function">
    <text evidence="1">Catalyzes the irreversible NADPH-dependent deamination of GMP to IMP. It functions in the conversion of nucleobase, nucleoside and nucleotide derivatives of G to A nucleotides, and in maintaining the intracellular balance of A and G nucleotides.</text>
</comment>
<comment type="catalytic activity">
    <reaction evidence="1">
        <text>IMP + NH4(+) + NADP(+) = GMP + NADPH + 2 H(+)</text>
        <dbReference type="Rhea" id="RHEA:17185"/>
        <dbReference type="ChEBI" id="CHEBI:15378"/>
        <dbReference type="ChEBI" id="CHEBI:28938"/>
        <dbReference type="ChEBI" id="CHEBI:57783"/>
        <dbReference type="ChEBI" id="CHEBI:58053"/>
        <dbReference type="ChEBI" id="CHEBI:58115"/>
        <dbReference type="ChEBI" id="CHEBI:58349"/>
        <dbReference type="EC" id="1.7.1.7"/>
    </reaction>
</comment>
<comment type="subunit">
    <text evidence="1">Homotetramer.</text>
</comment>
<comment type="similarity">
    <text evidence="1">Belongs to the IMPDH/GMPR family. GuaC type 1 subfamily.</text>
</comment>
<sequence length="347" mass="37430">MRIEEDLKLGFKDVLIRPKRSTLKSRSDVELERQFTFKHSGQSWSGVPIIAANMDTVGTFSMASALASFDILTAVHKHYSVEEWQAFINNSSADVLKHVMVSTGTSDADFEKTKQILDLNPALNFVCIDVANGYSEHFVQFVAKAREAWPTKTICAGNVVTGEMCEELILSGADIVKVGIGPGSVCTTRVKTGVGYPQLSAVIECADAAHGLGGMIVSDGGCTTPGDVAKAFGGGADFVMLGGMLAGHEESGGRIVEENGEKFMLFYGMSSESAMKRHVGCVAEYRAAEGKTVKLPLRGPVENTARDILGGLRSACTYVGASRLKELTKRTTFIRVQEQENRIFNNL</sequence>
<gene>
    <name evidence="1" type="primary">guaC</name>
    <name type="ordered locus">EcSMS35_0108</name>
</gene>
<evidence type="ECO:0000255" key="1">
    <source>
        <dbReference type="HAMAP-Rule" id="MF_00596"/>
    </source>
</evidence>
<protein>
    <recommendedName>
        <fullName evidence="1">GMP reductase</fullName>
        <ecNumber evidence="1">1.7.1.7</ecNumber>
    </recommendedName>
    <alternativeName>
        <fullName evidence="1">Guanosine 5'-monophosphate oxidoreductase</fullName>
        <shortName evidence="1">Guanosine monophosphate reductase</shortName>
    </alternativeName>
</protein>
<organism>
    <name type="scientific">Escherichia coli (strain SMS-3-5 / SECEC)</name>
    <dbReference type="NCBI Taxonomy" id="439855"/>
    <lineage>
        <taxon>Bacteria</taxon>
        <taxon>Pseudomonadati</taxon>
        <taxon>Pseudomonadota</taxon>
        <taxon>Gammaproteobacteria</taxon>
        <taxon>Enterobacterales</taxon>
        <taxon>Enterobacteriaceae</taxon>
        <taxon>Escherichia</taxon>
    </lineage>
</organism>
<reference key="1">
    <citation type="journal article" date="2008" name="J. Bacteriol.">
        <title>Insights into the environmental resistance gene pool from the genome sequence of the multidrug-resistant environmental isolate Escherichia coli SMS-3-5.</title>
        <authorList>
            <person name="Fricke W.F."/>
            <person name="Wright M.S."/>
            <person name="Lindell A.H."/>
            <person name="Harkins D.M."/>
            <person name="Baker-Austin C."/>
            <person name="Ravel J."/>
            <person name="Stepanauskas R."/>
        </authorList>
    </citation>
    <scope>NUCLEOTIDE SEQUENCE [LARGE SCALE GENOMIC DNA]</scope>
    <source>
        <strain>SMS-3-5 / SECEC</strain>
    </source>
</reference>
<accession>B1LG40</accession>
<name>GUAC_ECOSM</name>
<keyword id="KW-0479">Metal-binding</keyword>
<keyword id="KW-0521">NADP</keyword>
<keyword id="KW-0560">Oxidoreductase</keyword>
<keyword id="KW-0630">Potassium</keyword>